<evidence type="ECO:0000255" key="1">
    <source>
        <dbReference type="HAMAP-Rule" id="MF_00006"/>
    </source>
</evidence>
<sequence length="461" mass="51979">MAENHKLWGGRFEASLEKWVEEFGASISFDQKMAEFDLKGSIAHVTMLGETGIIAQEEALQIKQGLEELLEEYKAGKLEFDVSNEDIHMNIESLLTAKIGPVAGKLHTARSRNDQVATDMHLYLKAKLVEVIEKIDNLRNTLVSLADKHTYTIMPGYTHLQHAQPISFGHHLMAYYNMFTRDSERFEFNIKHTDISPLGAAALAGTTFPIDRNMTSDLMGFAKPYSNSLDAVSDRDFILEFLSNSSILMMHMTRICEEIINWCSNEFKFVTLSDTFSTGSSIMPQKKNPDMAELIRGKSGRVYGNLIGLLTVMKSLPLAYNKDLQEDKEGMFDTVETITVAIDILAGMLNTMTVNDKHMAESTEKDFSNATELADYLATKGLPFREAHEIVGKLVLECTKAGYYLQDVPLERYQEVSDLIEEDIYETLKSHTAVERRHSLGGTGFDQVKWQIKEAQQSLNK</sequence>
<feature type="chain" id="PRO_1000000549" description="Argininosuccinate lyase">
    <location>
        <begin position="1"/>
        <end position="461"/>
    </location>
</feature>
<reference key="1">
    <citation type="journal article" date="2006" name="Proc. Natl. Acad. Sci. U.S.A.">
        <title>Comparative genomics of the lactic acid bacteria.</title>
        <authorList>
            <person name="Makarova K.S."/>
            <person name="Slesarev A."/>
            <person name="Wolf Y.I."/>
            <person name="Sorokin A."/>
            <person name="Mirkin B."/>
            <person name="Koonin E.V."/>
            <person name="Pavlov A."/>
            <person name="Pavlova N."/>
            <person name="Karamychev V."/>
            <person name="Polouchine N."/>
            <person name="Shakhova V."/>
            <person name="Grigoriev I."/>
            <person name="Lou Y."/>
            <person name="Rohksar D."/>
            <person name="Lucas S."/>
            <person name="Huang K."/>
            <person name="Goodstein D.M."/>
            <person name="Hawkins T."/>
            <person name="Plengvidhya V."/>
            <person name="Welker D."/>
            <person name="Hughes J."/>
            <person name="Goh Y."/>
            <person name="Benson A."/>
            <person name="Baldwin K."/>
            <person name="Lee J.-H."/>
            <person name="Diaz-Muniz I."/>
            <person name="Dosti B."/>
            <person name="Smeianov V."/>
            <person name="Wechter W."/>
            <person name="Barabote R."/>
            <person name="Lorca G."/>
            <person name="Altermann E."/>
            <person name="Barrangou R."/>
            <person name="Ganesan B."/>
            <person name="Xie Y."/>
            <person name="Rawsthorne H."/>
            <person name="Tamir D."/>
            <person name="Parker C."/>
            <person name="Breidt F."/>
            <person name="Broadbent J.R."/>
            <person name="Hutkins R."/>
            <person name="O'Sullivan D."/>
            <person name="Steele J."/>
            <person name="Unlu G."/>
            <person name="Saier M.H. Jr."/>
            <person name="Klaenhammer T."/>
            <person name="Richardson P."/>
            <person name="Kozyavkin S."/>
            <person name="Weimer B.C."/>
            <person name="Mills D.A."/>
        </authorList>
    </citation>
    <scope>NUCLEOTIDE SEQUENCE [LARGE SCALE GENOMIC DNA]</scope>
    <source>
        <strain>ATCC BAA-491 / LMD-9</strain>
    </source>
</reference>
<accession>Q03IP9</accession>
<gene>
    <name evidence="1" type="primary">argH</name>
    <name type="ordered locus">STER_1791</name>
</gene>
<keyword id="KW-0028">Amino-acid biosynthesis</keyword>
<keyword id="KW-0055">Arginine biosynthesis</keyword>
<keyword id="KW-0963">Cytoplasm</keyword>
<keyword id="KW-0456">Lyase</keyword>
<protein>
    <recommendedName>
        <fullName evidence="1">Argininosuccinate lyase</fullName>
        <shortName evidence="1">ASAL</shortName>
        <ecNumber evidence="1">4.3.2.1</ecNumber>
    </recommendedName>
    <alternativeName>
        <fullName evidence="1">Arginosuccinase</fullName>
    </alternativeName>
</protein>
<proteinExistence type="inferred from homology"/>
<comment type="catalytic activity">
    <reaction evidence="1">
        <text>2-(N(omega)-L-arginino)succinate = fumarate + L-arginine</text>
        <dbReference type="Rhea" id="RHEA:24020"/>
        <dbReference type="ChEBI" id="CHEBI:29806"/>
        <dbReference type="ChEBI" id="CHEBI:32682"/>
        <dbReference type="ChEBI" id="CHEBI:57472"/>
        <dbReference type="EC" id="4.3.2.1"/>
    </reaction>
</comment>
<comment type="pathway">
    <text evidence="1">Amino-acid biosynthesis; L-arginine biosynthesis; L-arginine from L-ornithine and carbamoyl phosphate: step 3/3.</text>
</comment>
<comment type="subcellular location">
    <subcellularLocation>
        <location evidence="1">Cytoplasm</location>
    </subcellularLocation>
</comment>
<comment type="similarity">
    <text evidence="1">Belongs to the lyase 1 family. Argininosuccinate lyase subfamily.</text>
</comment>
<organism>
    <name type="scientific">Streptococcus thermophilus (strain ATCC BAA-491 / LMD-9)</name>
    <dbReference type="NCBI Taxonomy" id="322159"/>
    <lineage>
        <taxon>Bacteria</taxon>
        <taxon>Bacillati</taxon>
        <taxon>Bacillota</taxon>
        <taxon>Bacilli</taxon>
        <taxon>Lactobacillales</taxon>
        <taxon>Streptococcaceae</taxon>
        <taxon>Streptococcus</taxon>
    </lineage>
</organism>
<dbReference type="EC" id="4.3.2.1" evidence="1"/>
<dbReference type="EMBL" id="CP000419">
    <property type="protein sequence ID" value="ABJ66923.1"/>
    <property type="molecule type" value="Genomic_DNA"/>
</dbReference>
<dbReference type="RefSeq" id="WP_002953530.1">
    <property type="nucleotide sequence ID" value="NC_008532.1"/>
</dbReference>
<dbReference type="SMR" id="Q03IP9"/>
<dbReference type="GeneID" id="66899549"/>
<dbReference type="KEGG" id="ste:STER_1791"/>
<dbReference type="HOGENOM" id="CLU_027272_2_3_9"/>
<dbReference type="UniPathway" id="UPA00068">
    <property type="reaction ID" value="UER00114"/>
</dbReference>
<dbReference type="GO" id="GO:0005829">
    <property type="term" value="C:cytosol"/>
    <property type="evidence" value="ECO:0007669"/>
    <property type="project" value="TreeGrafter"/>
</dbReference>
<dbReference type="GO" id="GO:0004056">
    <property type="term" value="F:argininosuccinate lyase activity"/>
    <property type="evidence" value="ECO:0007669"/>
    <property type="project" value="UniProtKB-UniRule"/>
</dbReference>
<dbReference type="GO" id="GO:0042450">
    <property type="term" value="P:arginine biosynthetic process via ornithine"/>
    <property type="evidence" value="ECO:0007669"/>
    <property type="project" value="InterPro"/>
</dbReference>
<dbReference type="GO" id="GO:0006526">
    <property type="term" value="P:L-arginine biosynthetic process"/>
    <property type="evidence" value="ECO:0007669"/>
    <property type="project" value="UniProtKB-UniRule"/>
</dbReference>
<dbReference type="CDD" id="cd01359">
    <property type="entry name" value="Argininosuccinate_lyase"/>
    <property type="match status" value="1"/>
</dbReference>
<dbReference type="FunFam" id="1.10.275.10:FF:000002">
    <property type="entry name" value="Argininosuccinate lyase"/>
    <property type="match status" value="1"/>
</dbReference>
<dbReference type="FunFam" id="1.10.40.30:FF:000001">
    <property type="entry name" value="Argininosuccinate lyase"/>
    <property type="match status" value="1"/>
</dbReference>
<dbReference type="FunFam" id="1.20.200.10:FF:000002">
    <property type="entry name" value="Argininosuccinate lyase"/>
    <property type="match status" value="1"/>
</dbReference>
<dbReference type="Gene3D" id="1.10.40.30">
    <property type="entry name" value="Fumarase/aspartase (C-terminal domain)"/>
    <property type="match status" value="1"/>
</dbReference>
<dbReference type="Gene3D" id="1.20.200.10">
    <property type="entry name" value="Fumarase/aspartase (Central domain)"/>
    <property type="match status" value="1"/>
</dbReference>
<dbReference type="Gene3D" id="1.10.275.10">
    <property type="entry name" value="Fumarase/aspartase (N-terminal domain)"/>
    <property type="match status" value="1"/>
</dbReference>
<dbReference type="HAMAP" id="MF_00006">
    <property type="entry name" value="Arg_succ_lyase"/>
    <property type="match status" value="1"/>
</dbReference>
<dbReference type="InterPro" id="IPR029419">
    <property type="entry name" value="Arg_succ_lyase_C"/>
</dbReference>
<dbReference type="InterPro" id="IPR009049">
    <property type="entry name" value="Argininosuccinate_lyase"/>
</dbReference>
<dbReference type="InterPro" id="IPR024083">
    <property type="entry name" value="Fumarase/histidase_N"/>
</dbReference>
<dbReference type="InterPro" id="IPR020557">
    <property type="entry name" value="Fumarate_lyase_CS"/>
</dbReference>
<dbReference type="InterPro" id="IPR000362">
    <property type="entry name" value="Fumarate_lyase_fam"/>
</dbReference>
<dbReference type="InterPro" id="IPR022761">
    <property type="entry name" value="Fumarate_lyase_N"/>
</dbReference>
<dbReference type="InterPro" id="IPR008948">
    <property type="entry name" value="L-Aspartase-like"/>
</dbReference>
<dbReference type="NCBIfam" id="TIGR00838">
    <property type="entry name" value="argH"/>
    <property type="match status" value="1"/>
</dbReference>
<dbReference type="PANTHER" id="PTHR43814">
    <property type="entry name" value="ARGININOSUCCINATE LYASE"/>
    <property type="match status" value="1"/>
</dbReference>
<dbReference type="PANTHER" id="PTHR43814:SF1">
    <property type="entry name" value="ARGININOSUCCINATE LYASE"/>
    <property type="match status" value="1"/>
</dbReference>
<dbReference type="Pfam" id="PF14698">
    <property type="entry name" value="ASL_C2"/>
    <property type="match status" value="1"/>
</dbReference>
<dbReference type="Pfam" id="PF00206">
    <property type="entry name" value="Lyase_1"/>
    <property type="match status" value="1"/>
</dbReference>
<dbReference type="PRINTS" id="PR00145">
    <property type="entry name" value="ARGSUCLYASE"/>
</dbReference>
<dbReference type="PRINTS" id="PR00149">
    <property type="entry name" value="FUMRATELYASE"/>
</dbReference>
<dbReference type="SUPFAM" id="SSF48557">
    <property type="entry name" value="L-aspartase-like"/>
    <property type="match status" value="1"/>
</dbReference>
<dbReference type="PROSITE" id="PS00163">
    <property type="entry name" value="FUMARATE_LYASES"/>
    <property type="match status" value="1"/>
</dbReference>
<name>ARLY_STRTD</name>